<accession>B1IE50</accession>
<proteinExistence type="inferred from homology"/>
<sequence>MGILNKIFGTYSERELRRVNPIVNKIEALDEKMQSLKDEDFKLKTEEFKSRLEKGEKLDDILPEAFALVREAAHRTIGLKHYREQLIGGVVLHQGRIGEMKTGEGKTLVATLPAYVNALTGEGVHIVTVNDYLAKRDRDLMAPVYEFLGLKVGVILHNLNNEERQEAYGSDITYGTNSEFGFDYLRDNMVVYKEERVQRKLNFSIVDEVDSILIDEARTPLIISGQGEKSTEFYKVADYFTKSLIAEKDFTIDEKANSAMLTDEGVNKAENFFKVDNYADAENMEIQHHVVQALKANYVMKKDKDYMIKDGEILIVDEFTGRAMEGRRYSDGLHQAIEAKEGVRVERESKTLATITYQNYFRMYNKLSGMTGTAQTEENEFREIYGLDVIVIPTHEPIARIDNADVVYKSEKGKFKAIVDEIVERYKKGQPMLVGTVSIEKSEMLSSMLKKKGVPHQVLNAKYHEKEAEIISHAGEYGMVTIATNMAGRGTDIKLTKEAEEAGGLMIIGTERHESRRIDNQLRGRSGRQGDPGESRFFVSLEDDLMRIFGSERIQGIVDKLGLAEDEAIESKMVSSAIESAQKKVEGNNFDIRKTLLQYDDVINKQREIIYKQRSEVLEGEDLKDQIRDMIRDVAYTAVNSHISGVEEEFETELQNLVNYLEDICLPKALVKVKDISNLSDEEIKEKLLEAVENIYSNKEKEIGEEQIREIERVILLRVVDTKWMDHIDDMDHLKQGIGLRAYRQQDPVQAYQFEGSEMFEEMIYNIKVDTVRYLFHVEIEKAPEREKVAKETSTNYDEDSVKKQPIKKENRIGRNDMCPCGSGKKYKNCCGRMA</sequence>
<protein>
    <recommendedName>
        <fullName evidence="1">Protein translocase subunit SecA</fullName>
        <ecNumber evidence="1">7.4.2.8</ecNumber>
    </recommendedName>
</protein>
<keyword id="KW-0067">ATP-binding</keyword>
<keyword id="KW-1003">Cell membrane</keyword>
<keyword id="KW-0963">Cytoplasm</keyword>
<keyword id="KW-0472">Membrane</keyword>
<keyword id="KW-0479">Metal-binding</keyword>
<keyword id="KW-0547">Nucleotide-binding</keyword>
<keyword id="KW-0653">Protein transport</keyword>
<keyword id="KW-1278">Translocase</keyword>
<keyword id="KW-0811">Translocation</keyword>
<keyword id="KW-0813">Transport</keyword>
<keyword id="KW-0862">Zinc</keyword>
<gene>
    <name evidence="1" type="primary">secA</name>
    <name type="ordered locus">CLD_0607</name>
</gene>
<evidence type="ECO:0000255" key="1">
    <source>
        <dbReference type="HAMAP-Rule" id="MF_01382"/>
    </source>
</evidence>
<reference key="1">
    <citation type="journal article" date="2007" name="PLoS ONE">
        <title>Analysis of the neurotoxin complex genes in Clostridium botulinum A1-A4 and B1 strains: BoNT/A3, /Ba4 and /B1 clusters are located within plasmids.</title>
        <authorList>
            <person name="Smith T.J."/>
            <person name="Hill K.K."/>
            <person name="Foley B.T."/>
            <person name="Detter J.C."/>
            <person name="Munk A.C."/>
            <person name="Bruce D.C."/>
            <person name="Doggett N.A."/>
            <person name="Smith L.A."/>
            <person name="Marks J.D."/>
            <person name="Xie G."/>
            <person name="Brettin T.S."/>
        </authorList>
    </citation>
    <scope>NUCLEOTIDE SEQUENCE [LARGE SCALE GENOMIC DNA]</scope>
    <source>
        <strain>Okra / Type B1</strain>
    </source>
</reference>
<comment type="function">
    <text evidence="1">Part of the Sec protein translocase complex. Interacts with the SecYEG preprotein conducting channel. Has a central role in coupling the hydrolysis of ATP to the transfer of proteins into and across the cell membrane, serving as an ATP-driven molecular motor driving the stepwise translocation of polypeptide chains across the membrane.</text>
</comment>
<comment type="catalytic activity">
    <reaction evidence="1">
        <text>ATP + H2O + cellular proteinSide 1 = ADP + phosphate + cellular proteinSide 2.</text>
        <dbReference type="EC" id="7.4.2.8"/>
    </reaction>
</comment>
<comment type="cofactor">
    <cofactor evidence="1">
        <name>Zn(2+)</name>
        <dbReference type="ChEBI" id="CHEBI:29105"/>
    </cofactor>
    <text evidence="1">May bind 1 zinc ion per subunit.</text>
</comment>
<comment type="subunit">
    <text evidence="1">Monomer and homodimer. Part of the essential Sec protein translocation apparatus which comprises SecA, SecYEG and auxiliary proteins SecDF. Other proteins may also be involved.</text>
</comment>
<comment type="subcellular location">
    <subcellularLocation>
        <location evidence="1">Cell membrane</location>
        <topology evidence="1">Peripheral membrane protein</topology>
        <orientation evidence="1">Cytoplasmic side</orientation>
    </subcellularLocation>
    <subcellularLocation>
        <location evidence="1">Cytoplasm</location>
    </subcellularLocation>
    <text evidence="1">Distribution is 50-50.</text>
</comment>
<comment type="similarity">
    <text evidence="1">Belongs to the SecA family.</text>
</comment>
<feature type="chain" id="PRO_1000144996" description="Protein translocase subunit SecA">
    <location>
        <begin position="1"/>
        <end position="835"/>
    </location>
</feature>
<feature type="binding site" evidence="1">
    <location>
        <position position="85"/>
    </location>
    <ligand>
        <name>ATP</name>
        <dbReference type="ChEBI" id="CHEBI:30616"/>
    </ligand>
</feature>
<feature type="binding site" evidence="1">
    <location>
        <begin position="103"/>
        <end position="107"/>
    </location>
    <ligand>
        <name>ATP</name>
        <dbReference type="ChEBI" id="CHEBI:30616"/>
    </ligand>
</feature>
<feature type="binding site" evidence="1">
    <location>
        <position position="492"/>
    </location>
    <ligand>
        <name>ATP</name>
        <dbReference type="ChEBI" id="CHEBI:30616"/>
    </ligand>
</feature>
<feature type="binding site" evidence="1">
    <location>
        <position position="819"/>
    </location>
    <ligand>
        <name>Zn(2+)</name>
        <dbReference type="ChEBI" id="CHEBI:29105"/>
    </ligand>
</feature>
<feature type="binding site" evidence="1">
    <location>
        <position position="821"/>
    </location>
    <ligand>
        <name>Zn(2+)</name>
        <dbReference type="ChEBI" id="CHEBI:29105"/>
    </ligand>
</feature>
<feature type="binding site" evidence="1">
    <location>
        <position position="830"/>
    </location>
    <ligand>
        <name>Zn(2+)</name>
        <dbReference type="ChEBI" id="CHEBI:29105"/>
    </ligand>
</feature>
<feature type="binding site" evidence="1">
    <location>
        <position position="831"/>
    </location>
    <ligand>
        <name>Zn(2+)</name>
        <dbReference type="ChEBI" id="CHEBI:29105"/>
    </ligand>
</feature>
<organism>
    <name type="scientific">Clostridium botulinum (strain Okra / Type B1)</name>
    <dbReference type="NCBI Taxonomy" id="498213"/>
    <lineage>
        <taxon>Bacteria</taxon>
        <taxon>Bacillati</taxon>
        <taxon>Bacillota</taxon>
        <taxon>Clostridia</taxon>
        <taxon>Eubacteriales</taxon>
        <taxon>Clostridiaceae</taxon>
        <taxon>Clostridium</taxon>
    </lineage>
</organism>
<name>SECA_CLOBK</name>
<dbReference type="EC" id="7.4.2.8" evidence="1"/>
<dbReference type="EMBL" id="CP000939">
    <property type="protein sequence ID" value="ACA44714.1"/>
    <property type="molecule type" value="Genomic_DNA"/>
</dbReference>
<dbReference type="RefSeq" id="WP_003398962.1">
    <property type="nucleotide sequence ID" value="NC_010516.1"/>
</dbReference>
<dbReference type="SMR" id="B1IE50"/>
<dbReference type="KEGG" id="cbb:CLD_0607"/>
<dbReference type="HOGENOM" id="CLU_005314_3_0_9"/>
<dbReference type="Proteomes" id="UP000008541">
    <property type="component" value="Chromosome"/>
</dbReference>
<dbReference type="GO" id="GO:0031522">
    <property type="term" value="C:cell envelope Sec protein transport complex"/>
    <property type="evidence" value="ECO:0007669"/>
    <property type="project" value="TreeGrafter"/>
</dbReference>
<dbReference type="GO" id="GO:0005829">
    <property type="term" value="C:cytosol"/>
    <property type="evidence" value="ECO:0007669"/>
    <property type="project" value="TreeGrafter"/>
</dbReference>
<dbReference type="GO" id="GO:0005886">
    <property type="term" value="C:plasma membrane"/>
    <property type="evidence" value="ECO:0007669"/>
    <property type="project" value="UniProtKB-SubCell"/>
</dbReference>
<dbReference type="GO" id="GO:0005524">
    <property type="term" value="F:ATP binding"/>
    <property type="evidence" value="ECO:0007669"/>
    <property type="project" value="UniProtKB-UniRule"/>
</dbReference>
<dbReference type="GO" id="GO:0046872">
    <property type="term" value="F:metal ion binding"/>
    <property type="evidence" value="ECO:0007669"/>
    <property type="project" value="UniProtKB-KW"/>
</dbReference>
<dbReference type="GO" id="GO:0008564">
    <property type="term" value="F:protein-exporting ATPase activity"/>
    <property type="evidence" value="ECO:0007669"/>
    <property type="project" value="UniProtKB-EC"/>
</dbReference>
<dbReference type="GO" id="GO:0065002">
    <property type="term" value="P:intracellular protein transmembrane transport"/>
    <property type="evidence" value="ECO:0007669"/>
    <property type="project" value="UniProtKB-UniRule"/>
</dbReference>
<dbReference type="GO" id="GO:0017038">
    <property type="term" value="P:protein import"/>
    <property type="evidence" value="ECO:0007669"/>
    <property type="project" value="InterPro"/>
</dbReference>
<dbReference type="GO" id="GO:0006605">
    <property type="term" value="P:protein targeting"/>
    <property type="evidence" value="ECO:0007669"/>
    <property type="project" value="UniProtKB-UniRule"/>
</dbReference>
<dbReference type="GO" id="GO:0043952">
    <property type="term" value="P:protein transport by the Sec complex"/>
    <property type="evidence" value="ECO:0007669"/>
    <property type="project" value="TreeGrafter"/>
</dbReference>
<dbReference type="CDD" id="cd17928">
    <property type="entry name" value="DEXDc_SecA"/>
    <property type="match status" value="1"/>
</dbReference>
<dbReference type="CDD" id="cd18803">
    <property type="entry name" value="SF2_C_secA"/>
    <property type="match status" value="1"/>
</dbReference>
<dbReference type="FunFam" id="1.10.3060.10:FF:000002">
    <property type="entry name" value="Preprotein translocase subunit SecA"/>
    <property type="match status" value="1"/>
</dbReference>
<dbReference type="FunFam" id="3.40.50.300:FF:000694">
    <property type="entry name" value="Preprotein translocase subunit SecA"/>
    <property type="match status" value="1"/>
</dbReference>
<dbReference type="FunFam" id="3.90.1440.10:FF:000001">
    <property type="entry name" value="Preprotein translocase subunit SecA"/>
    <property type="match status" value="1"/>
</dbReference>
<dbReference type="Gene3D" id="1.10.3060.10">
    <property type="entry name" value="Helical scaffold and wing domains of SecA"/>
    <property type="match status" value="1"/>
</dbReference>
<dbReference type="Gene3D" id="3.40.50.300">
    <property type="entry name" value="P-loop containing nucleotide triphosphate hydrolases"/>
    <property type="match status" value="3"/>
</dbReference>
<dbReference type="Gene3D" id="3.90.1440.10">
    <property type="entry name" value="SecA, preprotein cross-linking domain"/>
    <property type="match status" value="1"/>
</dbReference>
<dbReference type="HAMAP" id="MF_01382">
    <property type="entry name" value="SecA"/>
    <property type="match status" value="1"/>
</dbReference>
<dbReference type="InterPro" id="IPR014001">
    <property type="entry name" value="Helicase_ATP-bd"/>
</dbReference>
<dbReference type="InterPro" id="IPR001650">
    <property type="entry name" value="Helicase_C-like"/>
</dbReference>
<dbReference type="InterPro" id="IPR027417">
    <property type="entry name" value="P-loop_NTPase"/>
</dbReference>
<dbReference type="InterPro" id="IPR004027">
    <property type="entry name" value="SEC_C_motif"/>
</dbReference>
<dbReference type="InterPro" id="IPR000185">
    <property type="entry name" value="SecA"/>
</dbReference>
<dbReference type="InterPro" id="IPR020937">
    <property type="entry name" value="SecA_CS"/>
</dbReference>
<dbReference type="InterPro" id="IPR011115">
    <property type="entry name" value="SecA_DEAD"/>
</dbReference>
<dbReference type="InterPro" id="IPR014018">
    <property type="entry name" value="SecA_motor_DEAD"/>
</dbReference>
<dbReference type="InterPro" id="IPR011130">
    <property type="entry name" value="SecA_preprotein_X-link_dom"/>
</dbReference>
<dbReference type="InterPro" id="IPR044722">
    <property type="entry name" value="SecA_SF2_C"/>
</dbReference>
<dbReference type="InterPro" id="IPR011116">
    <property type="entry name" value="SecA_Wing/Scaffold"/>
</dbReference>
<dbReference type="InterPro" id="IPR036266">
    <property type="entry name" value="SecA_Wing/Scaffold_sf"/>
</dbReference>
<dbReference type="InterPro" id="IPR036670">
    <property type="entry name" value="SecA_X-link_sf"/>
</dbReference>
<dbReference type="NCBIfam" id="NF006630">
    <property type="entry name" value="PRK09200.1"/>
    <property type="match status" value="1"/>
</dbReference>
<dbReference type="NCBIfam" id="NF009538">
    <property type="entry name" value="PRK12904.1"/>
    <property type="match status" value="1"/>
</dbReference>
<dbReference type="NCBIfam" id="TIGR00963">
    <property type="entry name" value="secA"/>
    <property type="match status" value="1"/>
</dbReference>
<dbReference type="PANTHER" id="PTHR30612:SF0">
    <property type="entry name" value="CHLOROPLAST PROTEIN-TRANSPORTING ATPASE"/>
    <property type="match status" value="1"/>
</dbReference>
<dbReference type="PANTHER" id="PTHR30612">
    <property type="entry name" value="SECA INNER MEMBRANE COMPONENT OF SEC PROTEIN SECRETION SYSTEM"/>
    <property type="match status" value="1"/>
</dbReference>
<dbReference type="Pfam" id="PF21090">
    <property type="entry name" value="P-loop_SecA"/>
    <property type="match status" value="1"/>
</dbReference>
<dbReference type="Pfam" id="PF02810">
    <property type="entry name" value="SEC-C"/>
    <property type="match status" value="1"/>
</dbReference>
<dbReference type="Pfam" id="PF07517">
    <property type="entry name" value="SecA_DEAD"/>
    <property type="match status" value="1"/>
</dbReference>
<dbReference type="Pfam" id="PF01043">
    <property type="entry name" value="SecA_PP_bind"/>
    <property type="match status" value="1"/>
</dbReference>
<dbReference type="Pfam" id="PF07516">
    <property type="entry name" value="SecA_SW"/>
    <property type="match status" value="1"/>
</dbReference>
<dbReference type="PRINTS" id="PR00906">
    <property type="entry name" value="SECA"/>
</dbReference>
<dbReference type="SMART" id="SM00957">
    <property type="entry name" value="SecA_DEAD"/>
    <property type="match status" value="1"/>
</dbReference>
<dbReference type="SMART" id="SM00958">
    <property type="entry name" value="SecA_PP_bind"/>
    <property type="match status" value="1"/>
</dbReference>
<dbReference type="SUPFAM" id="SSF81886">
    <property type="entry name" value="Helical scaffold and wing domains of SecA"/>
    <property type="match status" value="1"/>
</dbReference>
<dbReference type="SUPFAM" id="SSF52540">
    <property type="entry name" value="P-loop containing nucleoside triphosphate hydrolases"/>
    <property type="match status" value="2"/>
</dbReference>
<dbReference type="SUPFAM" id="SSF81767">
    <property type="entry name" value="Pre-protein crosslinking domain of SecA"/>
    <property type="match status" value="1"/>
</dbReference>
<dbReference type="PROSITE" id="PS01312">
    <property type="entry name" value="SECA"/>
    <property type="match status" value="1"/>
</dbReference>
<dbReference type="PROSITE" id="PS51196">
    <property type="entry name" value="SECA_MOTOR_DEAD"/>
    <property type="match status" value="1"/>
</dbReference>